<dbReference type="EC" id="2.4.3.1" evidence="5"/>
<dbReference type="EMBL" id="D16106">
    <property type="protein sequence ID" value="BAA03680.1"/>
    <property type="molecule type" value="mRNA"/>
</dbReference>
<dbReference type="EMBL" id="AK084124">
    <property type="protein sequence ID" value="BAC39120.1"/>
    <property type="molecule type" value="mRNA"/>
</dbReference>
<dbReference type="EMBL" id="CH466521">
    <property type="protein sequence ID" value="EDK97666.1"/>
    <property type="molecule type" value="Genomic_DNA"/>
</dbReference>
<dbReference type="EMBL" id="CH466521">
    <property type="protein sequence ID" value="EDK97667.1"/>
    <property type="molecule type" value="Genomic_DNA"/>
</dbReference>
<dbReference type="EMBL" id="BC027833">
    <property type="protein sequence ID" value="AAH27833.1"/>
    <property type="molecule type" value="mRNA"/>
</dbReference>
<dbReference type="EMBL" id="BC092222">
    <property type="protein sequence ID" value="AAH92222.1"/>
    <property type="molecule type" value="mRNA"/>
</dbReference>
<dbReference type="EMBL" id="BC096026">
    <property type="protein sequence ID" value="AAH96026.1"/>
    <property type="molecule type" value="mRNA"/>
</dbReference>
<dbReference type="CCDS" id="CCDS28077.1"/>
<dbReference type="RefSeq" id="NP_001239434.1">
    <property type="nucleotide sequence ID" value="NM_001252505.1"/>
</dbReference>
<dbReference type="RefSeq" id="NP_001239435.1">
    <property type="nucleotide sequence ID" value="NM_001252506.1"/>
</dbReference>
<dbReference type="RefSeq" id="NP_001413535.1">
    <property type="nucleotide sequence ID" value="NM_001426606.1"/>
</dbReference>
<dbReference type="RefSeq" id="NP_666045.1">
    <property type="nucleotide sequence ID" value="NM_145933.4"/>
</dbReference>
<dbReference type="RefSeq" id="XP_006521936.1">
    <property type="nucleotide sequence ID" value="XM_006521873.3"/>
</dbReference>
<dbReference type="RefSeq" id="XP_006521937.1">
    <property type="nucleotide sequence ID" value="XM_006521874.1"/>
</dbReference>
<dbReference type="RefSeq" id="XP_006521938.1">
    <property type="nucleotide sequence ID" value="XM_006521875.4"/>
</dbReference>
<dbReference type="RefSeq" id="XP_006521939.1">
    <property type="nucleotide sequence ID" value="XM_006521876.5"/>
</dbReference>
<dbReference type="RefSeq" id="XP_011244150.1">
    <property type="nucleotide sequence ID" value="XM_011245848.2"/>
</dbReference>
<dbReference type="SMR" id="Q64685"/>
<dbReference type="FunCoup" id="Q64685">
    <property type="interactions" value="537"/>
</dbReference>
<dbReference type="STRING" id="10090.ENSMUSP00000023601"/>
<dbReference type="CAZy" id="GT29">
    <property type="family name" value="Glycosyltransferase Family 29"/>
</dbReference>
<dbReference type="GlyCosmos" id="Q64685">
    <property type="glycosylation" value="2 sites, No reported glycans"/>
</dbReference>
<dbReference type="GlyGen" id="Q64685">
    <property type="glycosylation" value="2 sites"/>
</dbReference>
<dbReference type="iPTMnet" id="Q64685"/>
<dbReference type="PhosphoSitePlus" id="Q64685"/>
<dbReference type="PaxDb" id="10090-ENSMUSP00000023601"/>
<dbReference type="PeptideAtlas" id="Q64685"/>
<dbReference type="ProteomicsDB" id="261039"/>
<dbReference type="Antibodypedia" id="4243">
    <property type="antibodies" value="585 antibodies from 38 providers"/>
</dbReference>
<dbReference type="DNASU" id="20440"/>
<dbReference type="Ensembl" id="ENSMUST00000023601.14">
    <property type="protein sequence ID" value="ENSMUSP00000023601.8"/>
    <property type="gene ID" value="ENSMUSG00000022885.17"/>
</dbReference>
<dbReference type="Ensembl" id="ENSMUST00000115335.2">
    <property type="protein sequence ID" value="ENSMUSP00000110992.2"/>
    <property type="gene ID" value="ENSMUSG00000022885.17"/>
</dbReference>
<dbReference type="Ensembl" id="ENSMUST00000178797.8">
    <property type="protein sequence ID" value="ENSMUSP00000136206.2"/>
    <property type="gene ID" value="ENSMUSG00000022885.17"/>
</dbReference>
<dbReference type="GeneID" id="20440"/>
<dbReference type="KEGG" id="mmu:20440"/>
<dbReference type="UCSC" id="uc007yto.2">
    <property type="organism name" value="mouse"/>
</dbReference>
<dbReference type="AGR" id="MGI:108470"/>
<dbReference type="CTD" id="6480"/>
<dbReference type="MGI" id="MGI:108470">
    <property type="gene designation" value="St6gal1"/>
</dbReference>
<dbReference type="VEuPathDB" id="HostDB:ENSMUSG00000022885"/>
<dbReference type="eggNOG" id="KOG2692">
    <property type="taxonomic scope" value="Eukaryota"/>
</dbReference>
<dbReference type="GeneTree" id="ENSGT00940000157053"/>
<dbReference type="HOGENOM" id="CLU_038334_0_0_1"/>
<dbReference type="InParanoid" id="Q64685"/>
<dbReference type="OMA" id="THPEQPF"/>
<dbReference type="OrthoDB" id="10264956at2759"/>
<dbReference type="PhylomeDB" id="Q64685"/>
<dbReference type="TreeFam" id="TF323961"/>
<dbReference type="BRENDA" id="2.4.99.1">
    <property type="organism ID" value="3474"/>
</dbReference>
<dbReference type="Reactome" id="R-MMU-4085001">
    <property type="pathway name" value="Sialic acid metabolism"/>
</dbReference>
<dbReference type="Reactome" id="R-MMU-975577">
    <property type="pathway name" value="N-Glycan antennae elongation"/>
</dbReference>
<dbReference type="Reactome" id="R-MMU-977068">
    <property type="pathway name" value="Termination of O-glycan biosynthesis"/>
</dbReference>
<dbReference type="UniPathway" id="UPA00378"/>
<dbReference type="BioGRID-ORCS" id="20440">
    <property type="hits" value="1 hit in 76 CRISPR screens"/>
</dbReference>
<dbReference type="ChiTaRS" id="St6gal1">
    <property type="organism name" value="mouse"/>
</dbReference>
<dbReference type="PRO" id="PR:Q64685"/>
<dbReference type="Proteomes" id="UP000000589">
    <property type="component" value="Chromosome 16"/>
</dbReference>
<dbReference type="RNAct" id="Q64685">
    <property type="molecule type" value="protein"/>
</dbReference>
<dbReference type="Bgee" id="ENSMUSG00000022885">
    <property type="expression patterns" value="Expressed in metanephric ureteric bud and 253 other cell types or tissues"/>
</dbReference>
<dbReference type="ExpressionAtlas" id="Q64685">
    <property type="expression patterns" value="baseline and differential"/>
</dbReference>
<dbReference type="GO" id="GO:0005576">
    <property type="term" value="C:extracellular region"/>
    <property type="evidence" value="ECO:0007669"/>
    <property type="project" value="UniProtKB-SubCell"/>
</dbReference>
<dbReference type="GO" id="GO:0032580">
    <property type="term" value="C:Golgi cisterna membrane"/>
    <property type="evidence" value="ECO:0007669"/>
    <property type="project" value="UniProtKB-SubCell"/>
</dbReference>
<dbReference type="GO" id="GO:0000139">
    <property type="term" value="C:Golgi membrane"/>
    <property type="evidence" value="ECO:0000250"/>
    <property type="project" value="UniProtKB"/>
</dbReference>
<dbReference type="GO" id="GO:0003835">
    <property type="term" value="F:beta-galactoside alpha-2,6-sialyltransferase activity"/>
    <property type="evidence" value="ECO:0000314"/>
    <property type="project" value="UniProtKB"/>
</dbReference>
<dbReference type="GO" id="GO:0042803">
    <property type="term" value="F:protein homodimerization activity"/>
    <property type="evidence" value="ECO:0000250"/>
    <property type="project" value="UniProtKB"/>
</dbReference>
<dbReference type="GO" id="GO:0008373">
    <property type="term" value="F:sialyltransferase activity"/>
    <property type="evidence" value="ECO:0000314"/>
    <property type="project" value="MGI"/>
</dbReference>
<dbReference type="GO" id="GO:0006054">
    <property type="term" value="P:N-acetylneuraminate metabolic process"/>
    <property type="evidence" value="ECO:0000250"/>
    <property type="project" value="UniProtKB"/>
</dbReference>
<dbReference type="GO" id="GO:0006486">
    <property type="term" value="P:protein glycosylation"/>
    <property type="evidence" value="ECO:0000315"/>
    <property type="project" value="MGI"/>
</dbReference>
<dbReference type="GO" id="GO:0018279">
    <property type="term" value="P:protein N-linked glycosylation via asparagine"/>
    <property type="evidence" value="ECO:0000314"/>
    <property type="project" value="UniProtKB"/>
</dbReference>
<dbReference type="GO" id="GO:0097503">
    <property type="term" value="P:sialylation"/>
    <property type="evidence" value="ECO:0007669"/>
    <property type="project" value="Ensembl"/>
</dbReference>
<dbReference type="CDD" id="cd23985">
    <property type="entry name" value="GT29_ST6GAL1"/>
    <property type="match status" value="1"/>
</dbReference>
<dbReference type="FunFam" id="3.90.1480.20:FF:000012">
    <property type="entry name" value="ST6 beta-galactoside alpha-2,6-sialyltransferase 1"/>
    <property type="match status" value="1"/>
</dbReference>
<dbReference type="Gene3D" id="3.90.1480.20">
    <property type="entry name" value="Glycosyl transferase family 29"/>
    <property type="match status" value="1"/>
</dbReference>
<dbReference type="InterPro" id="IPR001675">
    <property type="entry name" value="Glyco_trans_29"/>
</dbReference>
<dbReference type="InterPro" id="IPR038578">
    <property type="entry name" value="GT29-like_sf"/>
</dbReference>
<dbReference type="InterPro" id="IPR012163">
    <property type="entry name" value="Sialyl_trans"/>
</dbReference>
<dbReference type="PANTHER" id="PTHR46059">
    <property type="entry name" value="BETA-GALACTOSIDE ALPHA-2,6-SIALYLTRANSFERASE"/>
    <property type="match status" value="1"/>
</dbReference>
<dbReference type="PANTHER" id="PTHR46059:SF2">
    <property type="entry name" value="BETA-GALACTOSIDE ALPHA-2,6-SIALYLTRANSFERASE 1"/>
    <property type="match status" value="1"/>
</dbReference>
<dbReference type="Pfam" id="PF00777">
    <property type="entry name" value="Glyco_transf_29"/>
    <property type="match status" value="1"/>
</dbReference>
<dbReference type="PIRSF" id="PIRSF005557">
    <property type="entry name" value="Sialyl_trans"/>
    <property type="match status" value="1"/>
</dbReference>
<sequence length="403" mass="46586">MIHTNLKRKFSCFVLVFLLFAIICVWKKGSDYEALTLQAKVFQMPKSQEKVAVGPAPQAVFSNSKQDPKEGVQILSYPRVTAKVKPQPSLQVWDKDSTYSKLNPRLLKIWRNYLNMNKYKVSYKGPGPGVKFSVEALRCHLRDHVNVSMIEATDFPFNTTEWEGYLPKENFRTKAGPWHKCAVVSSAGSLKNSQLGREIDNHDAVLRFNGAPTDNFQQDVGTKTTIRLVNSQLVTTEKRFLKDSLYTEGILILWDPSVYHADIPQWYQKPDYNFFETYKSYRRLHPSQPFYILKPQMPWELWDIIQEISPDLIQPNPPSSGMLGIIIMMTLCDQVDIYEFLPSKRKTDVCYYHQKFFDSACTMGAYHPLLFEKNMVKHLNEGTDEDIYLFGKATLSGFRNNRC</sequence>
<protein>
    <recommendedName>
        <fullName>Beta-galactoside alpha-2,6-sialyltransferase 1</fullName>
        <shortName>Alpha 2,6-ST 1</shortName>
        <ecNumber evidence="5">2.4.3.1</ecNumber>
    </recommendedName>
    <alternativeName>
        <fullName>CMP-N-acetylneuraminate-beta-galactosamide-alpha-2,6-sialyltransferase 1</fullName>
    </alternativeName>
    <alternativeName>
        <fullName>ST6Gal I</fullName>
        <shortName>ST6GalI</shortName>
    </alternativeName>
    <alternativeName>
        <fullName>Sialyltransferase 1</fullName>
    </alternativeName>
</protein>
<proteinExistence type="evidence at protein level"/>
<evidence type="ECO:0000250" key="1"/>
<evidence type="ECO:0000250" key="2">
    <source>
        <dbReference type="UniProtKB" id="P13721"/>
    </source>
</evidence>
<evidence type="ECO:0000250" key="3">
    <source>
        <dbReference type="UniProtKB" id="P15907"/>
    </source>
</evidence>
<evidence type="ECO:0000255" key="4"/>
<evidence type="ECO:0000269" key="5">
    <source>
    </source>
</evidence>
<evidence type="ECO:0000305" key="6"/>
<accession>Q64685</accession>
<accession>Q8K1L1</accession>
<organism>
    <name type="scientific">Mus musculus</name>
    <name type="common">Mouse</name>
    <dbReference type="NCBI Taxonomy" id="10090"/>
    <lineage>
        <taxon>Eukaryota</taxon>
        <taxon>Metazoa</taxon>
        <taxon>Chordata</taxon>
        <taxon>Craniata</taxon>
        <taxon>Vertebrata</taxon>
        <taxon>Euteleostomi</taxon>
        <taxon>Mammalia</taxon>
        <taxon>Eutheria</taxon>
        <taxon>Euarchontoglires</taxon>
        <taxon>Glires</taxon>
        <taxon>Rodentia</taxon>
        <taxon>Myomorpha</taxon>
        <taxon>Muroidea</taxon>
        <taxon>Muridae</taxon>
        <taxon>Murinae</taxon>
        <taxon>Mus</taxon>
        <taxon>Mus</taxon>
    </lineage>
</organism>
<reference key="1">
    <citation type="journal article" date="1993" name="Bioorg. Med. Chem.">
        <title>Two step single primer mediated polymerase chain reaction. Application to cloning of putative mouse, beta-galactoside alpha 2,6-sialyltransferase cDNA.</title>
        <authorList>
            <person name="Hamamoto T."/>
            <person name="Kawasaki M."/>
            <person name="Kurosawa N."/>
            <person name="Nakaoka T."/>
            <person name="Lee Y.-C."/>
            <person name="Tsuji S."/>
        </authorList>
    </citation>
    <scope>NUCLEOTIDE SEQUENCE [MRNA]</scope>
    <source>
        <tissue>Brain</tissue>
        <tissue>Liver</tissue>
    </source>
</reference>
<reference key="2">
    <citation type="journal article" date="2005" name="Science">
        <title>The transcriptional landscape of the mammalian genome.</title>
        <authorList>
            <person name="Carninci P."/>
            <person name="Kasukawa T."/>
            <person name="Katayama S."/>
            <person name="Gough J."/>
            <person name="Frith M.C."/>
            <person name="Maeda N."/>
            <person name="Oyama R."/>
            <person name="Ravasi T."/>
            <person name="Lenhard B."/>
            <person name="Wells C."/>
            <person name="Kodzius R."/>
            <person name="Shimokawa K."/>
            <person name="Bajic V.B."/>
            <person name="Brenner S.E."/>
            <person name="Batalov S."/>
            <person name="Forrest A.R."/>
            <person name="Zavolan M."/>
            <person name="Davis M.J."/>
            <person name="Wilming L.G."/>
            <person name="Aidinis V."/>
            <person name="Allen J.E."/>
            <person name="Ambesi-Impiombato A."/>
            <person name="Apweiler R."/>
            <person name="Aturaliya R.N."/>
            <person name="Bailey T.L."/>
            <person name="Bansal M."/>
            <person name="Baxter L."/>
            <person name="Beisel K.W."/>
            <person name="Bersano T."/>
            <person name="Bono H."/>
            <person name="Chalk A.M."/>
            <person name="Chiu K.P."/>
            <person name="Choudhary V."/>
            <person name="Christoffels A."/>
            <person name="Clutterbuck D.R."/>
            <person name="Crowe M.L."/>
            <person name="Dalla E."/>
            <person name="Dalrymple B.P."/>
            <person name="de Bono B."/>
            <person name="Della Gatta G."/>
            <person name="di Bernardo D."/>
            <person name="Down T."/>
            <person name="Engstrom P."/>
            <person name="Fagiolini M."/>
            <person name="Faulkner G."/>
            <person name="Fletcher C.F."/>
            <person name="Fukushima T."/>
            <person name="Furuno M."/>
            <person name="Futaki S."/>
            <person name="Gariboldi M."/>
            <person name="Georgii-Hemming P."/>
            <person name="Gingeras T.R."/>
            <person name="Gojobori T."/>
            <person name="Green R.E."/>
            <person name="Gustincich S."/>
            <person name="Harbers M."/>
            <person name="Hayashi Y."/>
            <person name="Hensch T.K."/>
            <person name="Hirokawa N."/>
            <person name="Hill D."/>
            <person name="Huminiecki L."/>
            <person name="Iacono M."/>
            <person name="Ikeo K."/>
            <person name="Iwama A."/>
            <person name="Ishikawa T."/>
            <person name="Jakt M."/>
            <person name="Kanapin A."/>
            <person name="Katoh M."/>
            <person name="Kawasawa Y."/>
            <person name="Kelso J."/>
            <person name="Kitamura H."/>
            <person name="Kitano H."/>
            <person name="Kollias G."/>
            <person name="Krishnan S.P."/>
            <person name="Kruger A."/>
            <person name="Kummerfeld S.K."/>
            <person name="Kurochkin I.V."/>
            <person name="Lareau L.F."/>
            <person name="Lazarevic D."/>
            <person name="Lipovich L."/>
            <person name="Liu J."/>
            <person name="Liuni S."/>
            <person name="McWilliam S."/>
            <person name="Madan Babu M."/>
            <person name="Madera M."/>
            <person name="Marchionni L."/>
            <person name="Matsuda H."/>
            <person name="Matsuzawa S."/>
            <person name="Miki H."/>
            <person name="Mignone F."/>
            <person name="Miyake S."/>
            <person name="Morris K."/>
            <person name="Mottagui-Tabar S."/>
            <person name="Mulder N."/>
            <person name="Nakano N."/>
            <person name="Nakauchi H."/>
            <person name="Ng P."/>
            <person name="Nilsson R."/>
            <person name="Nishiguchi S."/>
            <person name="Nishikawa S."/>
            <person name="Nori F."/>
            <person name="Ohara O."/>
            <person name="Okazaki Y."/>
            <person name="Orlando V."/>
            <person name="Pang K.C."/>
            <person name="Pavan W.J."/>
            <person name="Pavesi G."/>
            <person name="Pesole G."/>
            <person name="Petrovsky N."/>
            <person name="Piazza S."/>
            <person name="Reed J."/>
            <person name="Reid J.F."/>
            <person name="Ring B.Z."/>
            <person name="Ringwald M."/>
            <person name="Rost B."/>
            <person name="Ruan Y."/>
            <person name="Salzberg S.L."/>
            <person name="Sandelin A."/>
            <person name="Schneider C."/>
            <person name="Schoenbach C."/>
            <person name="Sekiguchi K."/>
            <person name="Semple C.A."/>
            <person name="Seno S."/>
            <person name="Sessa L."/>
            <person name="Sheng Y."/>
            <person name="Shibata Y."/>
            <person name="Shimada H."/>
            <person name="Shimada K."/>
            <person name="Silva D."/>
            <person name="Sinclair B."/>
            <person name="Sperling S."/>
            <person name="Stupka E."/>
            <person name="Sugiura K."/>
            <person name="Sultana R."/>
            <person name="Takenaka Y."/>
            <person name="Taki K."/>
            <person name="Tammoja K."/>
            <person name="Tan S.L."/>
            <person name="Tang S."/>
            <person name="Taylor M.S."/>
            <person name="Tegner J."/>
            <person name="Teichmann S.A."/>
            <person name="Ueda H.R."/>
            <person name="van Nimwegen E."/>
            <person name="Verardo R."/>
            <person name="Wei C.L."/>
            <person name="Yagi K."/>
            <person name="Yamanishi H."/>
            <person name="Zabarovsky E."/>
            <person name="Zhu S."/>
            <person name="Zimmer A."/>
            <person name="Hide W."/>
            <person name="Bult C."/>
            <person name="Grimmond S.M."/>
            <person name="Teasdale R.D."/>
            <person name="Liu E.T."/>
            <person name="Brusic V."/>
            <person name="Quackenbush J."/>
            <person name="Wahlestedt C."/>
            <person name="Mattick J.S."/>
            <person name="Hume D.A."/>
            <person name="Kai C."/>
            <person name="Sasaki D."/>
            <person name="Tomaru Y."/>
            <person name="Fukuda S."/>
            <person name="Kanamori-Katayama M."/>
            <person name="Suzuki M."/>
            <person name="Aoki J."/>
            <person name="Arakawa T."/>
            <person name="Iida J."/>
            <person name="Imamura K."/>
            <person name="Itoh M."/>
            <person name="Kato T."/>
            <person name="Kawaji H."/>
            <person name="Kawagashira N."/>
            <person name="Kawashima T."/>
            <person name="Kojima M."/>
            <person name="Kondo S."/>
            <person name="Konno H."/>
            <person name="Nakano K."/>
            <person name="Ninomiya N."/>
            <person name="Nishio T."/>
            <person name="Okada M."/>
            <person name="Plessy C."/>
            <person name="Shibata K."/>
            <person name="Shiraki T."/>
            <person name="Suzuki S."/>
            <person name="Tagami M."/>
            <person name="Waki K."/>
            <person name="Watahiki A."/>
            <person name="Okamura-Oho Y."/>
            <person name="Suzuki H."/>
            <person name="Kawai J."/>
            <person name="Hayashizaki Y."/>
        </authorList>
    </citation>
    <scope>NUCLEOTIDE SEQUENCE [LARGE SCALE MRNA]</scope>
    <source>
        <strain>C57BL/6J</strain>
        <tissue>Spinal ganglion</tissue>
    </source>
</reference>
<reference key="3">
    <citation type="submission" date="2005-07" db="EMBL/GenBank/DDBJ databases">
        <authorList>
            <person name="Mural R.J."/>
            <person name="Adams M.D."/>
            <person name="Myers E.W."/>
            <person name="Smith H.O."/>
            <person name="Venter J.C."/>
        </authorList>
    </citation>
    <scope>NUCLEOTIDE SEQUENCE [LARGE SCALE GENOMIC DNA]</scope>
</reference>
<reference key="4">
    <citation type="journal article" date="2004" name="Genome Res.">
        <title>The status, quality, and expansion of the NIH full-length cDNA project: the Mammalian Gene Collection (MGC).</title>
        <authorList>
            <consortium name="The MGC Project Team"/>
        </authorList>
    </citation>
    <scope>NUCLEOTIDE SEQUENCE [LARGE SCALE MRNA]</scope>
    <source>
        <strain>C57BL/6J</strain>
        <strain>FVB/N</strain>
        <tissue>Mammary tumor</tissue>
    </source>
</reference>
<reference key="5">
    <citation type="journal article" date="2012" name="J. Biochem.">
        <title>Disulfide linkage in mouse ST6Gal I: Determination of linkage positions and mutant analysis.</title>
        <authorList>
            <person name="Hirano Y."/>
            <person name="Suzuki T."/>
            <person name="Matsumoto T."/>
            <person name="Ishihara Y."/>
            <person name="Takaki Y."/>
            <person name="Kono M."/>
            <person name="Dohmae N."/>
            <person name="Tsuji S."/>
        </authorList>
    </citation>
    <scope>FUNCTION</scope>
    <scope>CATALYTIC ACTIVITY</scope>
    <scope>DISULFIDE BONDS</scope>
    <scope>IDENTIFICATION BY MASS SPECTROMETRY</scope>
    <scope>MUTAGENESIS OF CYS-139; CYS-181 AND CYS-350</scope>
</reference>
<comment type="function">
    <text evidence="5">Transfers sialic acid from CMP-sialic acid to galactose-containing acceptor substrates.</text>
</comment>
<comment type="catalytic activity">
    <reaction evidence="3 5">
        <text>a beta-D-galactoside + CMP-N-acetyl-beta-neuraminate = an N-acetyl-alpha-neuraminyl-(2-&gt;6)-beta-D-galactosyl derivative + CMP + H(+)</text>
        <dbReference type="Rhea" id="RHEA:52104"/>
        <dbReference type="ChEBI" id="CHEBI:15378"/>
        <dbReference type="ChEBI" id="CHEBI:28034"/>
        <dbReference type="ChEBI" id="CHEBI:57812"/>
        <dbReference type="ChEBI" id="CHEBI:60377"/>
        <dbReference type="ChEBI" id="CHEBI:136398"/>
        <dbReference type="EC" id="2.4.3.1"/>
    </reaction>
</comment>
<comment type="pathway">
    <text evidence="5">Protein modification; protein glycosylation.</text>
</comment>
<comment type="subunit">
    <text evidence="3">Monomer and homodimer.</text>
</comment>
<comment type="subcellular location">
    <subcellularLocation>
        <location evidence="3">Golgi apparatus</location>
        <location evidence="3">Golgi stack membrane</location>
        <topology evidence="3">Single-pass type II membrane protein</topology>
    </subcellularLocation>
    <subcellularLocation>
        <location evidence="2">Secreted</location>
    </subcellularLocation>
    <text evidence="2 3">Membrane-bound form in trans cisternae of Golgi (By similarity). Secreted into the body fluid (By similarity).</text>
</comment>
<comment type="PTM">
    <text evidence="2">N-glycosylated.</text>
</comment>
<comment type="similarity">
    <text evidence="6">Belongs to the glycosyltransferase 29 family.</text>
</comment>
<comment type="online information" name="Functional Glycomics Gateway - GTase">
    <link uri="http://www.functionalglycomics.org/glycomics/molecule/jsp/glycoEnzyme/viewGlycoEnzyme.jsp?gbpId=gt_mou_648"/>
    <text>ST6Gal I</text>
</comment>
<feature type="chain" id="PRO_0000149250" description="Beta-galactoside alpha-2,6-sialyltransferase 1">
    <location>
        <begin position="1"/>
        <end position="403"/>
    </location>
</feature>
<feature type="topological domain" description="Cytoplasmic" evidence="4">
    <location>
        <begin position="1"/>
        <end position="9"/>
    </location>
</feature>
<feature type="transmembrane region" description="Helical; Signal-anchor for type II membrane protein" evidence="4">
    <location>
        <begin position="10"/>
        <end position="26"/>
    </location>
</feature>
<feature type="topological domain" description="Lumenal" evidence="4">
    <location>
        <begin position="27"/>
        <end position="403"/>
    </location>
</feature>
<feature type="binding site" evidence="3">
    <location>
        <position position="186"/>
    </location>
    <ligand>
        <name>substrate</name>
    </ligand>
</feature>
<feature type="binding site" evidence="3">
    <location>
        <position position="209"/>
    </location>
    <ligand>
        <name>substrate</name>
    </ligand>
</feature>
<feature type="binding site" evidence="3">
    <location>
        <position position="230"/>
    </location>
    <ligand>
        <name>substrate</name>
    </ligand>
</feature>
<feature type="binding site" evidence="3">
    <location>
        <begin position="319"/>
        <end position="321"/>
    </location>
    <ligand>
        <name>substrate</name>
    </ligand>
</feature>
<feature type="binding site" evidence="3">
    <location>
        <position position="350"/>
    </location>
    <ligand>
        <name>substrate</name>
    </ligand>
</feature>
<feature type="binding site" evidence="3">
    <location>
        <position position="351"/>
    </location>
    <ligand>
        <name>substrate</name>
    </ligand>
</feature>
<feature type="binding site" evidence="3">
    <location>
        <position position="362"/>
    </location>
    <ligand>
        <name>substrate</name>
    </ligand>
</feature>
<feature type="binding site" evidence="1">
    <location>
        <position position="366"/>
    </location>
    <ligand>
        <name>substrate</name>
    </ligand>
</feature>
<feature type="binding site" evidence="3">
    <location>
        <position position="367"/>
    </location>
    <ligand>
        <name>substrate</name>
    </ligand>
</feature>
<feature type="binding site" evidence="3">
    <location>
        <position position="373"/>
    </location>
    <ligand>
        <name>substrate</name>
    </ligand>
</feature>
<feature type="modified residue" description="Phosphotyrosine" evidence="3">
    <location>
        <position position="366"/>
    </location>
</feature>
<feature type="glycosylation site" description="N-linked (GlcNAc...) asparagine" evidence="4">
    <location>
        <position position="146"/>
    </location>
</feature>
<feature type="glycosylation site" description="N-linked (GlcNAc...) asparagine" evidence="4">
    <location>
        <position position="158"/>
    </location>
</feature>
<feature type="disulfide bond" evidence="5">
    <location>
        <begin position="139"/>
        <end position="403"/>
    </location>
</feature>
<feature type="disulfide bond" evidence="5">
    <location>
        <begin position="181"/>
        <end position="332"/>
    </location>
</feature>
<feature type="disulfide bond" evidence="5">
    <location>
        <begin position="350"/>
        <end position="361"/>
    </location>
</feature>
<feature type="mutagenesis site" description="No effect on enzyme activity." evidence="5">
    <original>C</original>
    <variation>A</variation>
    <variation>S</variation>
    <location>
        <position position="139"/>
    </location>
</feature>
<feature type="mutagenesis site" description="Loss of enzyme activity." evidence="5">
    <original>C</original>
    <variation>S</variation>
    <location>
        <position position="181"/>
    </location>
</feature>
<feature type="mutagenesis site" description="Loss of enzyme activity." evidence="5">
    <original>C</original>
    <variation>A</variation>
    <variation>S</variation>
    <location>
        <position position="350"/>
    </location>
</feature>
<feature type="sequence conflict" description="In Ref. 1; BAA03680." evidence="6" ref="1">
    <original>K</original>
    <variation>R</variation>
    <location>
        <position position="131"/>
    </location>
</feature>
<feature type="sequence conflict" description="In Ref. 1; BAA03680." evidence="6" ref="1">
    <original>A</original>
    <variation>G</variation>
    <location>
        <position position="136"/>
    </location>
</feature>
<feature type="sequence conflict" description="In Ref. 1; BAA03680." evidence="6" ref="1">
    <original>F</original>
    <variation>S</variation>
    <location>
        <position position="155"/>
    </location>
</feature>
<feature type="sequence conflict" description="In Ref. 1; BAA03680." evidence="6" ref="1">
    <original>N</original>
    <variation>T</variation>
    <location>
        <position position="170"/>
    </location>
</feature>
<feature type="sequence conflict" description="In Ref. 1; BAA03680." evidence="6" ref="1">
    <original>WH</original>
    <variation>CT</variation>
    <location>
        <begin position="178"/>
        <end position="179"/>
    </location>
</feature>
<keyword id="KW-1015">Disulfide bond</keyword>
<keyword id="KW-0325">Glycoprotein</keyword>
<keyword id="KW-0328">Glycosyltransferase</keyword>
<keyword id="KW-0333">Golgi apparatus</keyword>
<keyword id="KW-0472">Membrane</keyword>
<keyword id="KW-0597">Phosphoprotein</keyword>
<keyword id="KW-1185">Reference proteome</keyword>
<keyword id="KW-0964">Secreted</keyword>
<keyword id="KW-0735">Signal-anchor</keyword>
<keyword id="KW-0808">Transferase</keyword>
<keyword id="KW-0812">Transmembrane</keyword>
<keyword id="KW-1133">Transmembrane helix</keyword>
<name>SIAT1_MOUSE</name>
<gene>
    <name type="primary">St6gal1</name>
    <name type="synonym">Siat1</name>
</gene>